<gene>
    <name evidence="1" type="primary">kdpC</name>
    <name type="ordered locus">EcHS_A0743</name>
</gene>
<keyword id="KW-0067">ATP-binding</keyword>
<keyword id="KW-0997">Cell inner membrane</keyword>
<keyword id="KW-1003">Cell membrane</keyword>
<keyword id="KW-0406">Ion transport</keyword>
<keyword id="KW-0472">Membrane</keyword>
<keyword id="KW-0547">Nucleotide-binding</keyword>
<keyword id="KW-0630">Potassium</keyword>
<keyword id="KW-0633">Potassium transport</keyword>
<keyword id="KW-0812">Transmembrane</keyword>
<keyword id="KW-1133">Transmembrane helix</keyword>
<keyword id="KW-0813">Transport</keyword>
<proteinExistence type="inferred from homology"/>
<comment type="function">
    <text evidence="1">Part of the high-affinity ATP-driven potassium transport (or Kdp) system, which catalyzes the hydrolysis of ATP coupled with the electrogenic transport of potassium into the cytoplasm. This subunit acts as a catalytic chaperone that increases the ATP-binding affinity of the ATP-hydrolyzing subunit KdpB by the formation of a transient KdpB/KdpC/ATP ternary complex.</text>
</comment>
<comment type="subunit">
    <text evidence="1">The system is composed of three essential subunits: KdpA, KdpB and KdpC.</text>
</comment>
<comment type="subcellular location">
    <subcellularLocation>
        <location evidence="1">Cell inner membrane</location>
        <topology evidence="1">Single-pass membrane protein</topology>
    </subcellularLocation>
</comment>
<comment type="similarity">
    <text evidence="1">Belongs to the KdpC family.</text>
</comment>
<reference key="1">
    <citation type="journal article" date="2008" name="J. Bacteriol.">
        <title>The pangenome structure of Escherichia coli: comparative genomic analysis of E. coli commensal and pathogenic isolates.</title>
        <authorList>
            <person name="Rasko D.A."/>
            <person name="Rosovitz M.J."/>
            <person name="Myers G.S.A."/>
            <person name="Mongodin E.F."/>
            <person name="Fricke W.F."/>
            <person name="Gajer P."/>
            <person name="Crabtree J."/>
            <person name="Sebaihia M."/>
            <person name="Thomson N.R."/>
            <person name="Chaudhuri R."/>
            <person name="Henderson I.R."/>
            <person name="Sperandio V."/>
            <person name="Ravel J."/>
        </authorList>
    </citation>
    <scope>NUCLEOTIDE SEQUENCE [LARGE SCALE GENOMIC DNA]</scope>
    <source>
        <strain>HS</strain>
    </source>
</reference>
<accession>A7ZXV7</accession>
<dbReference type="EMBL" id="CP000802">
    <property type="protein sequence ID" value="ABV05111.1"/>
    <property type="molecule type" value="Genomic_DNA"/>
</dbReference>
<dbReference type="RefSeq" id="WP_001741340.1">
    <property type="nucleotide sequence ID" value="NC_009800.1"/>
</dbReference>
<dbReference type="SMR" id="A7ZXV7"/>
<dbReference type="KEGG" id="ecx:EcHS_A0743"/>
<dbReference type="HOGENOM" id="CLU_077094_2_0_6"/>
<dbReference type="GO" id="GO:0005886">
    <property type="term" value="C:plasma membrane"/>
    <property type="evidence" value="ECO:0007669"/>
    <property type="project" value="UniProtKB-SubCell"/>
</dbReference>
<dbReference type="GO" id="GO:0005524">
    <property type="term" value="F:ATP binding"/>
    <property type="evidence" value="ECO:0007669"/>
    <property type="project" value="UniProtKB-UniRule"/>
</dbReference>
<dbReference type="GO" id="GO:0008556">
    <property type="term" value="F:P-type potassium transmembrane transporter activity"/>
    <property type="evidence" value="ECO:0007669"/>
    <property type="project" value="InterPro"/>
</dbReference>
<dbReference type="HAMAP" id="MF_00276">
    <property type="entry name" value="KdpC"/>
    <property type="match status" value="1"/>
</dbReference>
<dbReference type="InterPro" id="IPR003820">
    <property type="entry name" value="KdpC"/>
</dbReference>
<dbReference type="NCBIfam" id="TIGR00681">
    <property type="entry name" value="kdpC"/>
    <property type="match status" value="1"/>
</dbReference>
<dbReference type="NCBIfam" id="NF001454">
    <property type="entry name" value="PRK00315.1"/>
    <property type="match status" value="1"/>
</dbReference>
<dbReference type="PANTHER" id="PTHR30042">
    <property type="entry name" value="POTASSIUM-TRANSPORTING ATPASE C CHAIN"/>
    <property type="match status" value="1"/>
</dbReference>
<dbReference type="PANTHER" id="PTHR30042:SF2">
    <property type="entry name" value="POTASSIUM-TRANSPORTING ATPASE KDPC SUBUNIT"/>
    <property type="match status" value="1"/>
</dbReference>
<dbReference type="Pfam" id="PF02669">
    <property type="entry name" value="KdpC"/>
    <property type="match status" value="1"/>
</dbReference>
<dbReference type="PIRSF" id="PIRSF001296">
    <property type="entry name" value="K_ATPase_KdpC"/>
    <property type="match status" value="1"/>
</dbReference>
<organism>
    <name type="scientific">Escherichia coli O9:H4 (strain HS)</name>
    <dbReference type="NCBI Taxonomy" id="331112"/>
    <lineage>
        <taxon>Bacteria</taxon>
        <taxon>Pseudomonadati</taxon>
        <taxon>Pseudomonadota</taxon>
        <taxon>Gammaproteobacteria</taxon>
        <taxon>Enterobacterales</taxon>
        <taxon>Enterobacteriaceae</taxon>
        <taxon>Escherichia</taxon>
    </lineage>
</organism>
<name>KDPC_ECOHS</name>
<evidence type="ECO:0000255" key="1">
    <source>
        <dbReference type="HAMAP-Rule" id="MF_00276"/>
    </source>
</evidence>
<sequence>MSGLRPALSTFIFLLLITGGVYPLLTTALGQWWFPWQANGSLIREGDTVRGSALIGQNFTGNGYFHGRPSATAEMPYNPQASGGSNLAVSNPELDKLIAARVAALRAANPDASTSVPVELVTASASGLDNNITPQAAAWQIPRVAKARNLSVEQLTQLIAKYSQQPLVKYIGQPVVNIVELNLALDKLDE</sequence>
<feature type="chain" id="PRO_1000059216" description="Potassium-transporting ATPase KdpC subunit">
    <location>
        <begin position="1"/>
        <end position="190"/>
    </location>
</feature>
<feature type="transmembrane region" description="Helical" evidence="1">
    <location>
        <begin position="10"/>
        <end position="30"/>
    </location>
</feature>
<protein>
    <recommendedName>
        <fullName evidence="1">Potassium-transporting ATPase KdpC subunit</fullName>
    </recommendedName>
    <alternativeName>
        <fullName evidence="1">ATP phosphohydrolase [potassium-transporting] C chain</fullName>
    </alternativeName>
    <alternativeName>
        <fullName evidence="1">Potassium-binding and translocating subunit C</fullName>
    </alternativeName>
    <alternativeName>
        <fullName evidence="1">Potassium-translocating ATPase C chain</fullName>
    </alternativeName>
</protein>